<name>LOLD_PSEPK</name>
<keyword id="KW-0067">ATP-binding</keyword>
<keyword id="KW-0997">Cell inner membrane</keyword>
<keyword id="KW-1003">Cell membrane</keyword>
<keyword id="KW-0472">Membrane</keyword>
<keyword id="KW-0547">Nucleotide-binding</keyword>
<keyword id="KW-1185">Reference proteome</keyword>
<keyword id="KW-1278">Translocase</keyword>
<keyword id="KW-0813">Transport</keyword>
<dbReference type="EC" id="7.6.2.-" evidence="1"/>
<dbReference type="EMBL" id="AE015451">
    <property type="protein sequence ID" value="AAN67768.1"/>
    <property type="status" value="ALT_INIT"/>
    <property type="molecule type" value="Genomic_DNA"/>
</dbReference>
<dbReference type="RefSeq" id="NP_744304.1">
    <property type="nucleotide sequence ID" value="NC_002947.4"/>
</dbReference>
<dbReference type="SMR" id="Q88KY4"/>
<dbReference type="STRING" id="160488.PP_2155"/>
<dbReference type="PaxDb" id="160488-PP_2155"/>
<dbReference type="KEGG" id="ppu:PP_2155"/>
<dbReference type="PATRIC" id="fig|160488.4.peg.2272"/>
<dbReference type="eggNOG" id="COG1136">
    <property type="taxonomic scope" value="Bacteria"/>
</dbReference>
<dbReference type="HOGENOM" id="CLU_000604_1_22_6"/>
<dbReference type="OrthoDB" id="9801477at2"/>
<dbReference type="PhylomeDB" id="Q88KY4"/>
<dbReference type="Proteomes" id="UP000000556">
    <property type="component" value="Chromosome"/>
</dbReference>
<dbReference type="GO" id="GO:0005886">
    <property type="term" value="C:plasma membrane"/>
    <property type="evidence" value="ECO:0007669"/>
    <property type="project" value="UniProtKB-SubCell"/>
</dbReference>
<dbReference type="GO" id="GO:0005524">
    <property type="term" value="F:ATP binding"/>
    <property type="evidence" value="ECO:0007669"/>
    <property type="project" value="UniProtKB-KW"/>
</dbReference>
<dbReference type="GO" id="GO:0016887">
    <property type="term" value="F:ATP hydrolysis activity"/>
    <property type="evidence" value="ECO:0007669"/>
    <property type="project" value="InterPro"/>
</dbReference>
<dbReference type="GO" id="GO:0022857">
    <property type="term" value="F:transmembrane transporter activity"/>
    <property type="evidence" value="ECO:0007669"/>
    <property type="project" value="TreeGrafter"/>
</dbReference>
<dbReference type="GO" id="GO:0044874">
    <property type="term" value="P:lipoprotein localization to outer membrane"/>
    <property type="evidence" value="ECO:0007669"/>
    <property type="project" value="TreeGrafter"/>
</dbReference>
<dbReference type="GO" id="GO:0089705">
    <property type="term" value="P:protein localization to outer membrane"/>
    <property type="evidence" value="ECO:0007669"/>
    <property type="project" value="TreeGrafter"/>
</dbReference>
<dbReference type="CDD" id="cd03255">
    <property type="entry name" value="ABC_MJ0796_LolCDE_FtsE"/>
    <property type="match status" value="1"/>
</dbReference>
<dbReference type="FunFam" id="3.40.50.300:FF:000230">
    <property type="entry name" value="Lipoprotein-releasing system ATP-binding protein LolD"/>
    <property type="match status" value="1"/>
</dbReference>
<dbReference type="Gene3D" id="3.40.50.300">
    <property type="entry name" value="P-loop containing nucleotide triphosphate hydrolases"/>
    <property type="match status" value="1"/>
</dbReference>
<dbReference type="InterPro" id="IPR003593">
    <property type="entry name" value="AAA+_ATPase"/>
</dbReference>
<dbReference type="InterPro" id="IPR003439">
    <property type="entry name" value="ABC_transporter-like_ATP-bd"/>
</dbReference>
<dbReference type="InterPro" id="IPR017871">
    <property type="entry name" value="ABC_transporter-like_CS"/>
</dbReference>
<dbReference type="InterPro" id="IPR015854">
    <property type="entry name" value="ABC_transpr_LolD-like"/>
</dbReference>
<dbReference type="InterPro" id="IPR011924">
    <property type="entry name" value="LolD_lipo_ATP-bd"/>
</dbReference>
<dbReference type="InterPro" id="IPR017911">
    <property type="entry name" value="MacB-like_ATP-bd"/>
</dbReference>
<dbReference type="InterPro" id="IPR027417">
    <property type="entry name" value="P-loop_NTPase"/>
</dbReference>
<dbReference type="NCBIfam" id="TIGR02211">
    <property type="entry name" value="LolD_lipo_ex"/>
    <property type="match status" value="1"/>
</dbReference>
<dbReference type="PANTHER" id="PTHR24220">
    <property type="entry name" value="IMPORT ATP-BINDING PROTEIN"/>
    <property type="match status" value="1"/>
</dbReference>
<dbReference type="PANTHER" id="PTHR24220:SF689">
    <property type="entry name" value="LIPOPROTEIN-RELEASING SYSTEM ATP-BINDING PROTEIN LOLD"/>
    <property type="match status" value="1"/>
</dbReference>
<dbReference type="Pfam" id="PF00005">
    <property type="entry name" value="ABC_tran"/>
    <property type="match status" value="1"/>
</dbReference>
<dbReference type="SMART" id="SM00382">
    <property type="entry name" value="AAA"/>
    <property type="match status" value="1"/>
</dbReference>
<dbReference type="SUPFAM" id="SSF52540">
    <property type="entry name" value="P-loop containing nucleoside triphosphate hydrolases"/>
    <property type="match status" value="1"/>
</dbReference>
<dbReference type="PROSITE" id="PS00211">
    <property type="entry name" value="ABC_TRANSPORTER_1"/>
    <property type="match status" value="1"/>
</dbReference>
<dbReference type="PROSITE" id="PS50893">
    <property type="entry name" value="ABC_TRANSPORTER_2"/>
    <property type="match status" value="1"/>
</dbReference>
<dbReference type="PROSITE" id="PS51244">
    <property type="entry name" value="LOLD"/>
    <property type="match status" value="1"/>
</dbReference>
<comment type="function">
    <text evidence="1">Part of the ABC transporter complex LolCDE involved in the translocation of mature outer membrane-directed lipoproteins, from the inner membrane to the periplasmic chaperone, LolA. Responsible for the formation of the LolA-lipoprotein complex in an ATP-dependent manner.</text>
</comment>
<comment type="subunit">
    <text evidence="1">The complex is composed of two ATP-binding proteins (LolD) and two transmembrane proteins (LolC and LolE).</text>
</comment>
<comment type="subcellular location">
    <subcellularLocation>
        <location evidence="1">Cell inner membrane</location>
        <topology evidence="1">Peripheral membrane protein</topology>
    </subcellularLocation>
</comment>
<comment type="similarity">
    <text evidence="1">Belongs to the ABC transporter superfamily. Lipoprotein translocase (TC 3.A.1.125) family.</text>
</comment>
<comment type="sequence caution" evidence="2">
    <conflict type="erroneous initiation">
        <sequence resource="EMBL-CDS" id="AAN67768"/>
    </conflict>
</comment>
<protein>
    <recommendedName>
        <fullName evidence="1">Lipoprotein-releasing system ATP-binding protein LolD</fullName>
        <ecNumber evidence="1">7.6.2.-</ecNumber>
    </recommendedName>
</protein>
<reference key="1">
    <citation type="journal article" date="2002" name="Environ. Microbiol.">
        <title>Complete genome sequence and comparative analysis of the metabolically versatile Pseudomonas putida KT2440.</title>
        <authorList>
            <person name="Nelson K.E."/>
            <person name="Weinel C."/>
            <person name="Paulsen I.T."/>
            <person name="Dodson R.J."/>
            <person name="Hilbert H."/>
            <person name="Martins dos Santos V.A.P."/>
            <person name="Fouts D.E."/>
            <person name="Gill S.R."/>
            <person name="Pop M."/>
            <person name="Holmes M."/>
            <person name="Brinkac L.M."/>
            <person name="Beanan M.J."/>
            <person name="DeBoy R.T."/>
            <person name="Daugherty S.C."/>
            <person name="Kolonay J.F."/>
            <person name="Madupu R."/>
            <person name="Nelson W.C."/>
            <person name="White O."/>
            <person name="Peterson J.D."/>
            <person name="Khouri H.M."/>
            <person name="Hance I."/>
            <person name="Chris Lee P."/>
            <person name="Holtzapple E.K."/>
            <person name="Scanlan D."/>
            <person name="Tran K."/>
            <person name="Moazzez A."/>
            <person name="Utterback T.R."/>
            <person name="Rizzo M."/>
            <person name="Lee K."/>
            <person name="Kosack D."/>
            <person name="Moestl D."/>
            <person name="Wedler H."/>
            <person name="Lauber J."/>
            <person name="Stjepandic D."/>
            <person name="Hoheisel J."/>
            <person name="Straetz M."/>
            <person name="Heim S."/>
            <person name="Kiewitz C."/>
            <person name="Eisen J.A."/>
            <person name="Timmis K.N."/>
            <person name="Duesterhoeft A."/>
            <person name="Tuemmler B."/>
            <person name="Fraser C.M."/>
        </authorList>
    </citation>
    <scope>NUCLEOTIDE SEQUENCE [LARGE SCALE GENOMIC DNA]</scope>
    <source>
        <strain>ATCC 47054 / DSM 6125 / CFBP 8728 / NCIMB 11950 / KT2440</strain>
    </source>
</reference>
<feature type="chain" id="PRO_0000092449" description="Lipoprotein-releasing system ATP-binding protein LolD">
    <location>
        <begin position="1"/>
        <end position="227"/>
    </location>
</feature>
<feature type="domain" description="ABC transporter" evidence="1">
    <location>
        <begin position="7"/>
        <end position="227"/>
    </location>
</feature>
<feature type="binding site" evidence="1">
    <location>
        <begin position="43"/>
        <end position="50"/>
    </location>
    <ligand>
        <name>ATP</name>
        <dbReference type="ChEBI" id="CHEBI:30616"/>
    </ligand>
</feature>
<accession>Q88KY4</accession>
<gene>
    <name evidence="1" type="primary">lolD</name>
    <name type="ordered locus">PP_2155</name>
</gene>
<proteinExistence type="inferred from homology"/>
<sequence>MSDKAVLSCRNLGKSYDEGPESVQVLSGLNLELRAGERVAIVGSSGSGKSTLLNLLGGLDRPTQGSVWLAGEELSALGERARGLLRNRELGFVYQFHHLLPEFTAIENVCMPLLIGRTPIPEARERAEALLKRVGLGHRLNHKPAELSGGERQRVAIARALVNRPGLVMLDEPTGNLDHHTAQGIQELMQELSSASRTAFLVVTHDLNLARQMDRVLKLDDGHLVAI</sequence>
<evidence type="ECO:0000255" key="1">
    <source>
        <dbReference type="HAMAP-Rule" id="MF_01708"/>
    </source>
</evidence>
<evidence type="ECO:0000305" key="2"/>
<organism>
    <name type="scientific">Pseudomonas putida (strain ATCC 47054 / DSM 6125 / CFBP 8728 / NCIMB 11950 / KT2440)</name>
    <dbReference type="NCBI Taxonomy" id="160488"/>
    <lineage>
        <taxon>Bacteria</taxon>
        <taxon>Pseudomonadati</taxon>
        <taxon>Pseudomonadota</taxon>
        <taxon>Gammaproteobacteria</taxon>
        <taxon>Pseudomonadales</taxon>
        <taxon>Pseudomonadaceae</taxon>
        <taxon>Pseudomonas</taxon>
    </lineage>
</organism>